<accession>O32110</accession>
<gene>
    <name type="primary">yuiA</name>
    <name type="synonym">yumA</name>
    <name type="ordered locus">BSU32090</name>
</gene>
<name>YUIA_BACSU</name>
<reference key="1">
    <citation type="journal article" date="1997" name="Nature">
        <title>The complete genome sequence of the Gram-positive bacterium Bacillus subtilis.</title>
        <authorList>
            <person name="Kunst F."/>
            <person name="Ogasawara N."/>
            <person name="Moszer I."/>
            <person name="Albertini A.M."/>
            <person name="Alloni G."/>
            <person name="Azevedo V."/>
            <person name="Bertero M.G."/>
            <person name="Bessieres P."/>
            <person name="Bolotin A."/>
            <person name="Borchert S."/>
            <person name="Borriss R."/>
            <person name="Boursier L."/>
            <person name="Brans A."/>
            <person name="Braun M."/>
            <person name="Brignell S.C."/>
            <person name="Bron S."/>
            <person name="Brouillet S."/>
            <person name="Bruschi C.V."/>
            <person name="Caldwell B."/>
            <person name="Capuano V."/>
            <person name="Carter N.M."/>
            <person name="Choi S.-K."/>
            <person name="Codani J.-J."/>
            <person name="Connerton I.F."/>
            <person name="Cummings N.J."/>
            <person name="Daniel R.A."/>
            <person name="Denizot F."/>
            <person name="Devine K.M."/>
            <person name="Duesterhoeft A."/>
            <person name="Ehrlich S.D."/>
            <person name="Emmerson P.T."/>
            <person name="Entian K.-D."/>
            <person name="Errington J."/>
            <person name="Fabret C."/>
            <person name="Ferrari E."/>
            <person name="Foulger D."/>
            <person name="Fritz C."/>
            <person name="Fujita M."/>
            <person name="Fujita Y."/>
            <person name="Fuma S."/>
            <person name="Galizzi A."/>
            <person name="Galleron N."/>
            <person name="Ghim S.-Y."/>
            <person name="Glaser P."/>
            <person name="Goffeau A."/>
            <person name="Golightly E.J."/>
            <person name="Grandi G."/>
            <person name="Guiseppi G."/>
            <person name="Guy B.J."/>
            <person name="Haga K."/>
            <person name="Haiech J."/>
            <person name="Harwood C.R."/>
            <person name="Henaut A."/>
            <person name="Hilbert H."/>
            <person name="Holsappel S."/>
            <person name="Hosono S."/>
            <person name="Hullo M.-F."/>
            <person name="Itaya M."/>
            <person name="Jones L.-M."/>
            <person name="Joris B."/>
            <person name="Karamata D."/>
            <person name="Kasahara Y."/>
            <person name="Klaerr-Blanchard M."/>
            <person name="Klein C."/>
            <person name="Kobayashi Y."/>
            <person name="Koetter P."/>
            <person name="Koningstein G."/>
            <person name="Krogh S."/>
            <person name="Kumano M."/>
            <person name="Kurita K."/>
            <person name="Lapidus A."/>
            <person name="Lardinois S."/>
            <person name="Lauber J."/>
            <person name="Lazarevic V."/>
            <person name="Lee S.-M."/>
            <person name="Levine A."/>
            <person name="Liu H."/>
            <person name="Masuda S."/>
            <person name="Mauel C."/>
            <person name="Medigue C."/>
            <person name="Medina N."/>
            <person name="Mellado R.P."/>
            <person name="Mizuno M."/>
            <person name="Moestl D."/>
            <person name="Nakai S."/>
            <person name="Noback M."/>
            <person name="Noone D."/>
            <person name="O'Reilly M."/>
            <person name="Ogawa K."/>
            <person name="Ogiwara A."/>
            <person name="Oudega B."/>
            <person name="Park S.-H."/>
            <person name="Parro V."/>
            <person name="Pohl T.M."/>
            <person name="Portetelle D."/>
            <person name="Porwollik S."/>
            <person name="Prescott A.M."/>
            <person name="Presecan E."/>
            <person name="Pujic P."/>
            <person name="Purnelle B."/>
            <person name="Rapoport G."/>
            <person name="Rey M."/>
            <person name="Reynolds S."/>
            <person name="Rieger M."/>
            <person name="Rivolta C."/>
            <person name="Rocha E."/>
            <person name="Roche B."/>
            <person name="Rose M."/>
            <person name="Sadaie Y."/>
            <person name="Sato T."/>
            <person name="Scanlan E."/>
            <person name="Schleich S."/>
            <person name="Schroeter R."/>
            <person name="Scoffone F."/>
            <person name="Sekiguchi J."/>
            <person name="Sekowska A."/>
            <person name="Seror S.J."/>
            <person name="Serror P."/>
            <person name="Shin B.-S."/>
            <person name="Soldo B."/>
            <person name="Sorokin A."/>
            <person name="Tacconi E."/>
            <person name="Takagi T."/>
            <person name="Takahashi H."/>
            <person name="Takemaru K."/>
            <person name="Takeuchi M."/>
            <person name="Tamakoshi A."/>
            <person name="Tanaka T."/>
            <person name="Terpstra P."/>
            <person name="Tognoni A."/>
            <person name="Tosato V."/>
            <person name="Uchiyama S."/>
            <person name="Vandenbol M."/>
            <person name="Vannier F."/>
            <person name="Vassarotti A."/>
            <person name="Viari A."/>
            <person name="Wambutt R."/>
            <person name="Wedler E."/>
            <person name="Wedler H."/>
            <person name="Weitzenegger T."/>
            <person name="Winters P."/>
            <person name="Wipat A."/>
            <person name="Yamamoto H."/>
            <person name="Yamane K."/>
            <person name="Yasumoto K."/>
            <person name="Yata K."/>
            <person name="Yoshida K."/>
            <person name="Yoshikawa H.-F."/>
            <person name="Zumstein E."/>
            <person name="Yoshikawa H."/>
            <person name="Danchin A."/>
        </authorList>
    </citation>
    <scope>NUCLEOTIDE SEQUENCE [LARGE SCALE GENOMIC DNA]</scope>
    <source>
        <strain>168</strain>
    </source>
</reference>
<keyword id="KW-1185">Reference proteome</keyword>
<proteinExistence type="predicted"/>
<sequence>MKTATTTASHACPFCSGKGYFQLILGGSETCPSCQGTGKDSHSFSSR</sequence>
<organism>
    <name type="scientific">Bacillus subtilis (strain 168)</name>
    <dbReference type="NCBI Taxonomy" id="224308"/>
    <lineage>
        <taxon>Bacteria</taxon>
        <taxon>Bacillati</taxon>
        <taxon>Bacillota</taxon>
        <taxon>Bacilli</taxon>
        <taxon>Bacillales</taxon>
        <taxon>Bacillaceae</taxon>
        <taxon>Bacillus</taxon>
    </lineage>
</organism>
<feature type="chain" id="PRO_0000049920" description="Uncharacterized protein YuiA">
    <location>
        <begin position="1"/>
        <end position="47"/>
    </location>
</feature>
<dbReference type="EMBL" id="AL009126">
    <property type="protein sequence ID" value="CAB15199.1"/>
    <property type="molecule type" value="Genomic_DNA"/>
</dbReference>
<dbReference type="PIR" id="B70012">
    <property type="entry name" value="B70012"/>
</dbReference>
<dbReference type="RefSeq" id="NP_391089.1">
    <property type="nucleotide sequence ID" value="NC_000964.3"/>
</dbReference>
<dbReference type="RefSeq" id="WP_003243733.1">
    <property type="nucleotide sequence ID" value="NZ_OZ025638.1"/>
</dbReference>
<dbReference type="SMR" id="O32110"/>
<dbReference type="FunCoup" id="O32110">
    <property type="interactions" value="20"/>
</dbReference>
<dbReference type="STRING" id="224308.BSU32090"/>
<dbReference type="PaxDb" id="224308-BSU32090"/>
<dbReference type="EnsemblBacteria" id="CAB15199">
    <property type="protein sequence ID" value="CAB15199"/>
    <property type="gene ID" value="BSU_32090"/>
</dbReference>
<dbReference type="GeneID" id="938869"/>
<dbReference type="KEGG" id="bsu:BSU32090"/>
<dbReference type="PATRIC" id="fig|224308.179.peg.3475"/>
<dbReference type="InParanoid" id="O32110"/>
<dbReference type="OrthoDB" id="2455666at2"/>
<dbReference type="BioCyc" id="BSUB:BSU32090-MONOMER"/>
<dbReference type="Proteomes" id="UP000001570">
    <property type="component" value="Chromosome"/>
</dbReference>
<dbReference type="Gene3D" id="6.20.20.10">
    <property type="match status" value="1"/>
</dbReference>
<dbReference type="InterPro" id="IPR035272">
    <property type="entry name" value="DUF5351"/>
</dbReference>
<dbReference type="InterPro" id="IPR036410">
    <property type="entry name" value="HSP_DnaJ_Cys-rich_dom_sf"/>
</dbReference>
<dbReference type="Pfam" id="PF17302">
    <property type="entry name" value="DUF5351"/>
    <property type="match status" value="1"/>
</dbReference>
<dbReference type="SUPFAM" id="SSF57938">
    <property type="entry name" value="DnaJ/Hsp40 cysteine-rich domain"/>
    <property type="match status" value="1"/>
</dbReference>
<protein>
    <recommendedName>
        <fullName>Uncharacterized protein YuiA</fullName>
    </recommendedName>
</protein>